<name>GBF1_CAEEL</name>
<accession>G5EGS5</accession>
<accession>H8ESE7</accession>
<dbReference type="EMBL" id="BX284603">
    <property type="protein sequence ID" value="CAB03915.3"/>
    <property type="molecule type" value="Genomic_DNA"/>
</dbReference>
<dbReference type="EMBL" id="BX284603">
    <property type="protein sequence ID" value="CCG28191.1"/>
    <property type="molecule type" value="Genomic_DNA"/>
</dbReference>
<dbReference type="RefSeq" id="NP_001255139.1">
    <property type="nucleotide sequence ID" value="NM_001268210.1"/>
</dbReference>
<dbReference type="RefSeq" id="NP_001255140.1">
    <property type="nucleotide sequence ID" value="NM_001268211.1"/>
</dbReference>
<dbReference type="RefSeq" id="NP_001366879.1">
    <molecule id="G5EGS5-1"/>
    <property type="nucleotide sequence ID" value="NM_001379938.2"/>
</dbReference>
<dbReference type="RefSeq" id="NP_001368124.1">
    <molecule id="G5EGS5-2"/>
    <property type="nucleotide sequence ID" value="NM_001379939.1"/>
</dbReference>
<dbReference type="SMR" id="G5EGS5"/>
<dbReference type="FunCoup" id="G5EGS5">
    <property type="interactions" value="3335"/>
</dbReference>
<dbReference type="STRING" id="6239.C24H11.7a.1"/>
<dbReference type="PaxDb" id="6239-C24H11.7a"/>
<dbReference type="PeptideAtlas" id="G5EGS5"/>
<dbReference type="EnsemblMetazoa" id="C24H11.7a.1">
    <molecule id="G5EGS5-1"/>
    <property type="protein sequence ID" value="C24H11.7a.1"/>
    <property type="gene ID" value="WBGene00007703"/>
</dbReference>
<dbReference type="EnsemblMetazoa" id="C24H11.7b.1">
    <molecule id="G5EGS5-2"/>
    <property type="protein sequence ID" value="C24H11.7b.1"/>
    <property type="gene ID" value="WBGene00007703"/>
</dbReference>
<dbReference type="GeneID" id="176609"/>
<dbReference type="AGR" id="WB:WBGene00007703"/>
<dbReference type="WormBase" id="C24H11.7a">
    <molecule id="G5EGS5-1"/>
    <property type="protein sequence ID" value="CE44078"/>
    <property type="gene ID" value="WBGene00007703"/>
    <property type="gene designation" value="gbf-1"/>
</dbReference>
<dbReference type="WormBase" id="C24H11.7b">
    <molecule id="G5EGS5-2"/>
    <property type="protein sequence ID" value="CE47290"/>
    <property type="gene ID" value="WBGene00007703"/>
    <property type="gene designation" value="gbf-1"/>
</dbReference>
<dbReference type="eggNOG" id="KOG0928">
    <property type="taxonomic scope" value="Eukaryota"/>
</dbReference>
<dbReference type="GeneTree" id="ENSGT00940000168092"/>
<dbReference type="HOGENOM" id="CLU_001204_2_0_1"/>
<dbReference type="InParanoid" id="G5EGS5"/>
<dbReference type="OMA" id="CRDIRHH"/>
<dbReference type="OrthoDB" id="10258608at2759"/>
<dbReference type="PhylomeDB" id="G5EGS5"/>
<dbReference type="Reactome" id="R-CEL-199992">
    <property type="pathway name" value="trans-Golgi Network Vesicle Budding"/>
</dbReference>
<dbReference type="Reactome" id="R-CEL-6807878">
    <property type="pathway name" value="COPI-mediated anterograde transport"/>
</dbReference>
<dbReference type="Reactome" id="R-CEL-6811434">
    <property type="pathway name" value="COPI-dependent Golgi-to-ER retrograde traffic"/>
</dbReference>
<dbReference type="PRO" id="PR:G5EGS5"/>
<dbReference type="Proteomes" id="UP000001940">
    <property type="component" value="Chromosome III"/>
</dbReference>
<dbReference type="Bgee" id="WBGene00007703">
    <property type="expression patterns" value="Expressed in pharyngeal muscle cell (C elegans) and 3 other cell types or tissues"/>
</dbReference>
<dbReference type="ExpressionAtlas" id="G5EGS5">
    <property type="expression patterns" value="baseline and differential"/>
</dbReference>
<dbReference type="GO" id="GO:0070971">
    <property type="term" value="C:endoplasmic reticulum exit site"/>
    <property type="evidence" value="ECO:0000314"/>
    <property type="project" value="WormBase"/>
</dbReference>
<dbReference type="GO" id="GO:0005793">
    <property type="term" value="C:endoplasmic reticulum-Golgi intermediate compartment"/>
    <property type="evidence" value="ECO:0007669"/>
    <property type="project" value="UniProtKB-SubCell"/>
</dbReference>
<dbReference type="GO" id="GO:0000137">
    <property type="term" value="C:Golgi cis cisterna"/>
    <property type="evidence" value="ECO:0000314"/>
    <property type="project" value="WormBase"/>
</dbReference>
<dbReference type="GO" id="GO:0005085">
    <property type="term" value="F:guanyl-nucleotide exchange factor activity"/>
    <property type="evidence" value="ECO:0007669"/>
    <property type="project" value="InterPro"/>
</dbReference>
<dbReference type="GO" id="GO:0007029">
    <property type="term" value="P:endoplasmic reticulum organization"/>
    <property type="evidence" value="ECO:0000315"/>
    <property type="project" value="WormBase"/>
</dbReference>
<dbReference type="GO" id="GO:0016197">
    <property type="term" value="P:endosomal transport"/>
    <property type="evidence" value="ECO:0000315"/>
    <property type="project" value="WormBase"/>
</dbReference>
<dbReference type="GO" id="GO:0007005">
    <property type="term" value="P:mitochondrion organization"/>
    <property type="evidence" value="ECO:0000315"/>
    <property type="project" value="WormBase"/>
</dbReference>
<dbReference type="GO" id="GO:0032012">
    <property type="term" value="P:regulation of ARF protein signal transduction"/>
    <property type="evidence" value="ECO:0007669"/>
    <property type="project" value="InterPro"/>
</dbReference>
<dbReference type="GO" id="GO:0046903">
    <property type="term" value="P:secretion"/>
    <property type="evidence" value="ECO:0000315"/>
    <property type="project" value="WormBase"/>
</dbReference>
<dbReference type="CDD" id="cd00171">
    <property type="entry name" value="Sec7"/>
    <property type="match status" value="1"/>
</dbReference>
<dbReference type="FunFam" id="1.10.1000.11:FF:000007">
    <property type="entry name" value="Golgi-specific brefeldin A-resistance guanine nucleotide exchange factor 1"/>
    <property type="match status" value="1"/>
</dbReference>
<dbReference type="Gene3D" id="1.10.220.20">
    <property type="match status" value="1"/>
</dbReference>
<dbReference type="Gene3D" id="1.10.1000.11">
    <property type="entry name" value="Arf Nucleotide-binding Site Opener,domain 2"/>
    <property type="match status" value="1"/>
</dbReference>
<dbReference type="InterPro" id="IPR016024">
    <property type="entry name" value="ARM-type_fold"/>
</dbReference>
<dbReference type="InterPro" id="IPR056604">
    <property type="entry name" value="GBF1-like_TPR"/>
</dbReference>
<dbReference type="InterPro" id="IPR032691">
    <property type="entry name" value="Mon2/Sec7/BIG1-like_HUS"/>
</dbReference>
<dbReference type="InterPro" id="IPR023394">
    <property type="entry name" value="Sec7_C_sf"/>
</dbReference>
<dbReference type="InterPro" id="IPR000904">
    <property type="entry name" value="Sec7_dom"/>
</dbReference>
<dbReference type="InterPro" id="IPR035999">
    <property type="entry name" value="Sec7_dom_sf"/>
</dbReference>
<dbReference type="PANTHER" id="PTHR10663:SF388">
    <property type="entry name" value="GOLGI-SPECIFIC BREFELDIN A-RESISTANCE GUANINE NUCLEOTIDE EXCHANGE FACTOR 1"/>
    <property type="match status" value="1"/>
</dbReference>
<dbReference type="PANTHER" id="PTHR10663">
    <property type="entry name" value="GUANYL-NUCLEOTIDE EXCHANGE FACTOR"/>
    <property type="match status" value="1"/>
</dbReference>
<dbReference type="Pfam" id="PF01369">
    <property type="entry name" value="Sec7"/>
    <property type="match status" value="1"/>
</dbReference>
<dbReference type="Pfam" id="PF12783">
    <property type="entry name" value="Sec7-like_HUS"/>
    <property type="match status" value="1"/>
</dbReference>
<dbReference type="Pfam" id="PF23325">
    <property type="entry name" value="TPR_28"/>
    <property type="match status" value="1"/>
</dbReference>
<dbReference type="SMART" id="SM00222">
    <property type="entry name" value="Sec7"/>
    <property type="match status" value="1"/>
</dbReference>
<dbReference type="SUPFAM" id="SSF48371">
    <property type="entry name" value="ARM repeat"/>
    <property type="match status" value="1"/>
</dbReference>
<dbReference type="SUPFAM" id="SSF48425">
    <property type="entry name" value="Sec7 domain"/>
    <property type="match status" value="1"/>
</dbReference>
<dbReference type="PROSITE" id="PS50190">
    <property type="entry name" value="SEC7"/>
    <property type="match status" value="1"/>
</dbReference>
<feature type="chain" id="PRO_0000450677" description="Golgi-specific brefeldin A-resistance guanine nucleotide exchange factor 1 homolog">
    <location>
        <begin position="1"/>
        <end position="1975"/>
    </location>
</feature>
<feature type="domain" description="SEC7" evidence="2">
    <location>
        <begin position="624"/>
        <end position="812"/>
    </location>
</feature>
<feature type="region of interest" description="Disordered" evidence="3">
    <location>
        <begin position="216"/>
        <end position="243"/>
    </location>
</feature>
<feature type="region of interest" description="Disordered" evidence="3">
    <location>
        <begin position="299"/>
        <end position="352"/>
    </location>
</feature>
<feature type="region of interest" description="Disordered" evidence="3">
    <location>
        <begin position="1264"/>
        <end position="1318"/>
    </location>
</feature>
<feature type="region of interest" description="Disordered" evidence="3">
    <location>
        <begin position="1447"/>
        <end position="1473"/>
    </location>
</feature>
<feature type="region of interest" description="Disordered" evidence="3">
    <location>
        <begin position="1699"/>
        <end position="1751"/>
    </location>
</feature>
<feature type="region of interest" description="Disordered" evidence="3">
    <location>
        <begin position="1788"/>
        <end position="1854"/>
    </location>
</feature>
<feature type="region of interest" description="Disordered" evidence="3">
    <location>
        <begin position="1877"/>
        <end position="1975"/>
    </location>
</feature>
<feature type="compositionally biased region" description="Basic residues" evidence="3">
    <location>
        <begin position="221"/>
        <end position="230"/>
    </location>
</feature>
<feature type="compositionally biased region" description="Polar residues" evidence="3">
    <location>
        <begin position="1264"/>
        <end position="1277"/>
    </location>
</feature>
<feature type="compositionally biased region" description="Basic and acidic residues" evidence="3">
    <location>
        <begin position="1291"/>
        <end position="1309"/>
    </location>
</feature>
<feature type="compositionally biased region" description="Basic residues" evidence="3">
    <location>
        <begin position="1451"/>
        <end position="1464"/>
    </location>
</feature>
<feature type="compositionally biased region" description="Low complexity" evidence="3">
    <location>
        <begin position="1734"/>
        <end position="1751"/>
    </location>
</feature>
<feature type="compositionally biased region" description="Pro residues" evidence="3">
    <location>
        <begin position="1797"/>
        <end position="1808"/>
    </location>
</feature>
<feature type="compositionally biased region" description="Low complexity" evidence="3">
    <location>
        <begin position="1820"/>
        <end position="1854"/>
    </location>
</feature>
<feature type="compositionally biased region" description="Low complexity" evidence="3">
    <location>
        <begin position="1877"/>
        <end position="1894"/>
    </location>
</feature>
<feature type="compositionally biased region" description="Polar residues" evidence="3">
    <location>
        <begin position="1895"/>
        <end position="1909"/>
    </location>
</feature>
<feature type="compositionally biased region" description="Low complexity" evidence="3">
    <location>
        <begin position="1938"/>
        <end position="1957"/>
    </location>
</feature>
<feature type="splice variant" id="VSP_060671" description="In isoform b." evidence="7">
    <location>
        <begin position="1"/>
        <end position="1490"/>
    </location>
</feature>
<evidence type="ECO:0000250" key="1">
    <source>
        <dbReference type="UniProtKB" id="Q92538"/>
    </source>
</evidence>
<evidence type="ECO:0000255" key="2">
    <source>
        <dbReference type="PROSITE-ProRule" id="PRU00189"/>
    </source>
</evidence>
<evidence type="ECO:0000256" key="3">
    <source>
        <dbReference type="SAM" id="MobiDB-lite"/>
    </source>
</evidence>
<evidence type="ECO:0000269" key="4">
    <source>
    </source>
</evidence>
<evidence type="ECO:0000269" key="5">
    <source>
    </source>
</evidence>
<evidence type="ECO:0000269" key="6">
    <source>
    </source>
</evidence>
<evidence type="ECO:0000305" key="7"/>
<evidence type="ECO:0000312" key="8">
    <source>
        <dbReference type="Proteomes" id="UP000001940"/>
    </source>
</evidence>
<evidence type="ECO:0000312" key="9">
    <source>
        <dbReference type="WormBase" id="C24H11.7a"/>
    </source>
</evidence>
<evidence type="ECO:0000312" key="10">
    <source>
        <dbReference type="WormBase" id="C24H11.7b"/>
    </source>
</evidence>
<sequence>MATNGVYIVMGEANCVVALLNKARRQYQLSQVPTLEDTDPLLRNFTDLKEVLNEVADLADMNPQTYLSPFLDVIKAQNTNGPITEAALAAVAKFLNYGLIDASSIKAANAVESIAYAVVHTKFIGGKSTGSDECVLFKILQVLRSLLLSPPGILLSNEAVCDMMQSCFRIVFEQNLSLLLRKAAESTLADMTQLIFTRLPTFVEDTRHPYIRQLVNPTEKRQKRKKKRQLSVHIETKAKEPENVPTEMTKLIGEAAETAETDGAANLGYDVVLTTDPPVDTVTHPDPPIEEIIKLAEPISAGDEADSESEGGGGEEHHERPPVRAHAGLQREIVSDEEEIDTEQTVGGEEKMPYGLPCCRELLRFLITMTNPVDRHNTESMVILGLNLLIVALEAIADFLPNYDILMPLIKNELCRNLLQLLDTNRLPVLAATNRCCFLLFESMRMHMKFQLESYLKKLQSIVLTEEKQHENGGGGTEQKEMALESLVQLWRIPGLVTEMYLNFDCDLYCGNIFEDLTKLLVENSFPTVGGHTASLLSLDALLVVIETIEQNCEDRENGRGEVAKEQEHKDLKKLGLPVLSGYDLAKKMAISTGGKASPMPVSSSIVLRSNRHAPSTELPSMSQIIEQKKRKRLIAEGTELFNQSPKKGIAFLREKGILGHDEQSLVQWLRTNPQLDKKAIADYICNRKHAEVLNAFVKSFPFENTRLDVALRMFLETFRLPGESAEIALVMQHFSEEWFRANNEPFFHVDAAFTLSYAIIMLNVDQHNPQAKRSQPPMTVDCFRRNLSGTNDSRDFDPEMLADMYQAIKTEEIVMPAEQKGTVKEDYMWKVLLRRGETAEGSFYHAPTGWNDHDLFAVCWGPAVAALSYVFDKSEHEQILQKALTGYRKCAKIAAYYGMKEVFDNLCIHLCKFTTLTSMRDGGAGGGADEDVDLSAAALLSHSSSPEAVALAFGENHKAQLATRTLFYLVHENGNILREGWRNLFEALLQLFRARLLPAELTEVEDYVDEKGWVNIQRVHQKELPHTRNDSGLLSWFGLGGGASEADRRKPTQEQLSSMKLASQVISECRPSQIVADSKYLTSTSLAELLSSIAANSAQIVEQAEPQQKTASLSGEDEDALVFYLELIVAITLENKDRLPLVWPHVRRHLEWLLSPRFGRCPVLVERAVVGLLRVANRNLFRDNTVSDDVLHSLSMLLRLSPKALFIFSRQIAFGLYELIRANAANVHKKEHWAVLFALLEAAGAAVLPDDYVMMTTTEKQQQSLRVGGDQQQQRMAYSDVEGASGRGGGAHEERAYTSEGEERRRGGYDSNSDLESRVDSAGSLLGAQKQPADWIHLDHKDAAKATEEALTALGANVVSSKKNFRQFGSLVLRNGLGRHEPAAFLKVCECLAFLLRDAVHVTPDNFESSLQCLRTMVEASLDGGVYAAGPLSGDAQNRLRSNVTDEKAVKKHHHHHHGHKKKELCTDVTEDADESRNEEQQLIGNYQQMSLHLLDLCSQLHSQTPAIFAKWAQGASPAASDLATVAFIWTDIWRPLLQAIGRLSCDCRRGVRAAALTHLQRAFLPANMATLGAAEWQSCFGEVLFPLLTKLLEPFSQMDPIGMEDTRVRTLQIVAKTLLNHLSALSALDSFPDLWMLLLDYMEQYLRVDSCGNLNEAVPESLKNMLLVMDSTGIFAATPRLYDVTVERLNKFMPELIKDTIPNPPRPGQQQSEASEPKKEHASGLEPPPPSSNSTAATSTSDPSIATAQSSISTASSVVGPLVTCPEDAGISAPIPIQHPLTEVIVHSGPTSPIGSPPQTEPPASSPPQHQHSEHQQYEQYRQQQAAAAQQYQQYNQNYPQQQQQQQQQYAYSPEHAAYYQQQYAHQQQQYAEHYANQYQHYQQQQQQQQQHPVNPTSPSVHGQYSVANPLPLPAHPAYHPIVAPSVNSAFTHVYTPPQNNAPALAPSAPTTTSADSPYFTPIPYNPSQQEKP</sequence>
<organism evidence="8">
    <name type="scientific">Caenorhabditis elegans</name>
    <dbReference type="NCBI Taxonomy" id="6239"/>
    <lineage>
        <taxon>Eukaryota</taxon>
        <taxon>Metazoa</taxon>
        <taxon>Ecdysozoa</taxon>
        <taxon>Nematoda</taxon>
        <taxon>Chromadorea</taxon>
        <taxon>Rhabditida</taxon>
        <taxon>Rhabditina</taxon>
        <taxon>Rhabditomorpha</taxon>
        <taxon>Rhabditoidea</taxon>
        <taxon>Rhabditidae</taxon>
        <taxon>Peloderinae</taxon>
        <taxon>Caenorhabditis</taxon>
    </lineage>
</organism>
<gene>
    <name evidence="9" type="primary">gbf-1</name>
    <name evidence="9" type="synonym">phi-34</name>
    <name evidence="9" type="ORF">C24H11.7</name>
</gene>
<keyword id="KW-0025">Alternative splicing</keyword>
<keyword id="KW-0931">ER-Golgi transport</keyword>
<keyword id="KW-0333">Golgi apparatus</keyword>
<keyword id="KW-1185">Reference proteome</keyword>
<keyword id="KW-0813">Transport</keyword>
<reference evidence="8" key="1">
    <citation type="journal article" date="1998" name="Science">
        <title>Genome sequence of the nematode C. elegans: a platform for investigating biology.</title>
        <authorList>
            <consortium name="The C. elegans sequencing consortium"/>
        </authorList>
    </citation>
    <scope>NUCLEOTIDE SEQUENCE [LARGE SCALE GENOMIC DNA]</scope>
    <source>
        <strain evidence="8">Bristol N2</strain>
    </source>
</reference>
<reference evidence="7" key="2">
    <citation type="journal article" date="2013" name="PLoS ONE">
        <title>The ArfGEF GBF-1 Is Required for ER Structure, Secretion and Endocytic Transport in C. elegans.</title>
        <authorList>
            <person name="Ackema K.B."/>
            <person name="Sauder U."/>
            <person name="Solinger J.A."/>
            <person name="Spang A."/>
        </authorList>
    </citation>
    <scope>FUNCTION</scope>
    <scope>SUBCELLULAR LOCATION</scope>
    <scope>DISRUPTION PHENOTYPE</scope>
</reference>
<reference evidence="7" key="3">
    <citation type="journal article" date="2014" name="EMBO J.">
        <title>The small GTPase Arf1 modulates mitochondrial morphology and function.</title>
        <authorList>
            <person name="Ackema K.B."/>
            <person name="Hench J."/>
            <person name="Boeckler S."/>
            <person name="Wang S.C."/>
            <person name="Sauder U."/>
            <person name="Mergentaler H."/>
            <person name="Westermann B."/>
            <person name="Bard F."/>
            <person name="Frank S."/>
            <person name="Spang A."/>
        </authorList>
    </citation>
    <scope>FUNCTION</scope>
    <scope>DISRUPTION PHENOTYPE</scope>
</reference>
<reference evidence="7" key="4">
    <citation type="journal article" date="2015" name="PLoS ONE">
        <title>Serum- and Glucocorticoid-Inducible Kinase-1 (SGK-1) Plays a Role in Membrane Trafficking in Caenorhabditis elegans.</title>
        <authorList>
            <person name="Zhu M."/>
            <person name="Wu G."/>
            <person name="Li Y.X."/>
            <person name="Stevens J.K."/>
            <person name="Fan C.X."/>
            <person name="Spang A."/>
            <person name="Dong M.Q."/>
        </authorList>
    </citation>
    <scope>FUNCTION</scope>
    <scope>DISRUPTION PHENOTYPE</scope>
</reference>
<reference key="5">
    <citation type="journal article" date="2016" name="PLoS ONE">
        <title>Correction: Serum- and Glucocorticoid-Inducible Kinase-1 (SGK-1) Plays a Role in Membrane Trafficking in Caenorhabditis elegans.</title>
        <authorList>
            <person name="Zhu M."/>
            <person name="Wu G."/>
            <person name="Li Y.X."/>
            <person name="Stevens J.K."/>
            <person name="Fan C.X."/>
            <person name="Spang A."/>
            <person name="Dong M.Q."/>
        </authorList>
    </citation>
    <scope>ERRATUM OF PUBMED:26115433</scope>
</reference>
<proteinExistence type="inferred from homology"/>
<protein>
    <recommendedName>
        <fullName evidence="9">Golgi-specific brefeldin A-resistance guanine nucleotide exchange factor 1 homolog</fullName>
        <shortName>BFA-resistant GEF 1</shortName>
    </recommendedName>
</protein>
<comment type="function">
    <text evidence="1 4 5 6">Guanine-nucleotide exchange factor (GEF) for members of the Arf family of small GTPases involved in trafficking in the early secretory pathway; its GEF activity initiates the coating of nascent vesicles via the localized generation of activated ARFs through replacement of GDP with GTP (By similarity). Also, plays a role in receptor-mediated endocytosis in oocytes and endosomal trafficking (PubMed:23840591). Involved in vesicle retrograde transport from the ERGIC and cis-Golgi compartments to the endoplasmic reticulum (ER) (PubMed:23840591). Plays a role in maintaining mitochondrial morphology, network organization and function (PubMed:25190516). May be required for the basolateral cell membrane localization of the serine threonine protein kinase sgk-1 in intestinal cells (PubMed:26115433).</text>
</comment>
<comment type="subcellular location">
    <subcellularLocation>
        <location evidence="4">Golgi apparatus</location>
        <location evidence="4">cis-Golgi network</location>
    </subcellularLocation>
    <subcellularLocation>
        <location evidence="4">Endoplasmic reticulum-Golgi intermediate compartment</location>
    </subcellularLocation>
</comment>
<comment type="alternative products">
    <event type="alternative splicing"/>
    <isoform>
        <id>G5EGS5-1</id>
        <name evidence="9">a</name>
        <sequence type="displayed"/>
    </isoform>
    <isoform>
        <id>G5EGS5-2</id>
        <name evidence="10">b</name>
        <sequence type="described" ref="VSP_060671"/>
    </isoform>
</comment>
<comment type="disruption phenotype">
    <text evidence="4 5 6">RNAi-mediated knockdown at the L1 larval stage causes cuticle rupture, mostly through the vulva, and results in lethality in 50 to 80% of animals upon reaching adulthood (PubMed:23840591). Most surviving animals that reach adulthood are sterile due to embryonic lethality, and in over 90% of surviving animals there is an accumulation of vacuole-like structures in the body cavity (PubMed:23840591). The few larvae that hatch have severe cuticle formation abnormalities (PubMed:23840591). RNAi-mediated knockdown at the L2 or L3 larval stage, results in reduced lethality in response to oxidative stress induced by paraquat compared to wild-type (PubMed:25190516). RNAi-mediated knockdown at the L2 or L3 larval stage, results in enlarged mitochondria which are interconnected by thin membrane tubes in maturing oocytes (PubMed:25190516). RNAi-mediated knockdown at the L4 larval stage, results in impaired body bend movements, and disorganization of the mitochondrial network and increased connections between mitochondria in body wall muscle cells (PubMed:25190516). RNAi-mediated knockdown at the L3 or L4 larval stage, results in the normal production and fertilization of oocytes, but 60 to 70% of the fertilized oocytes are embryonic lethal (PubMed:23840591). Arrested eggs from these animals have disintegrated egg shells, which results in a mass of cells and membranes in the gonad (PubMed:23840591). While 30% of fertilized oocytes display defects in meiosis, with the extrusion of the second polar body during anaphase II often failing (PubMed:23840591). Furthermore, 30% of fertilized oocytes have cytokinesis defects (PubMed:23840591). RNAi-mediated knockdown at the L3 or L4 larval stage, results in defects in Golgi apparatus organization with small Golgi apparatus foci aggregating in large structures around the nuclear membrane and cell periphery in oocytes, and small vesicles accumulating at the endoplasmic reticulum-Golgi interface (PubMed:23840591). RNAi-mediated knockdown at the L3 or L4 larval stage, results in endoplasmic reticulum morphology defects with the absence of endoplasmic reticulum lumen in oocytes (PubMed:23840591). RNAi-mediated knockdown at the L3 or L4 larval stage, results in defective cav-1 transport from the Golgi apparatus to the plasma membrane in oocytes, and an accumulation of the yolk protein vit-2 in intestinal cells and in the body cavity (PubMed:23840591). RNAi-mediated knockdown at the L3 or L4 larval stage also results in defects in the endosomal pathway with reduced expression of the early endosomal protein rab-5 in the intestine (PubMed:23840591). RNAi-mediated knockdown results in the mis-localization of the serine threonine protein kinase sgk-1 in intestinal cells (PubMed:26115433).</text>
</comment>